<gene>
    <name type="primary">AGTRAP</name>
    <name type="synonym">ATRAP</name>
</gene>
<accession>Q6RW13</accession>
<accession>A8MVQ5</accession>
<accession>Q5SNV4</accession>
<accession>Q5SNV5</accession>
<accession>Q96AC0</accession>
<accession>Q96PL4</accession>
<accession>Q9NRW9</accession>
<sequence length="159" mass="17419">MELPAVNLKVILLGHWLLTTWGCIVFSGSYAWANFTILALGVWAVAQRDSIDAISMFLGGLLATIFLDIVHISIFYPRVSLTDTGRFGVGMAILSLLLKPLSCCFVYHMYRERGGELLVHTGFLGSSQDRSAYQTIDSAEAPADPFAVPEGRSQDARGY</sequence>
<reference key="1">
    <citation type="journal article" date="2002" name="Int. J. Biochem. Cell Biol.">
        <title>Identification and characterization of AGTRAP, a human homolog of murine angiotensin II receptor-associated protein (Agtrap).</title>
        <authorList>
            <person name="Wang W."/>
            <person name="Huang Y."/>
            <person name="Zhou Z."/>
            <person name="Tang R."/>
            <person name="Zhao W."/>
            <person name="Zeng L."/>
            <person name="Xu M."/>
            <person name="Cheng C."/>
            <person name="Gu S."/>
            <person name="Ying K."/>
            <person name="Xie Y."/>
            <person name="Mao Y."/>
        </authorList>
    </citation>
    <scope>NUCLEOTIDE SEQUENCE [MRNA] (ISOFORM 1)</scope>
    <scope>TISSUE SPECIFICITY</scope>
    <scope>INTERACTION WITH RACK1 AND AGTR1</scope>
    <source>
        <tissue>Fetal brain</tissue>
    </source>
</reference>
<reference key="2">
    <citation type="submission" date="1999-07" db="EMBL/GenBank/DDBJ databases">
        <authorList>
            <person name="Ye R.D."/>
            <person name="He R."/>
        </authorList>
    </citation>
    <scope>NUCLEOTIDE SEQUENCE [MRNA] (ISOFORM 1)</scope>
    <source>
        <tissue>Kidney</tissue>
    </source>
</reference>
<reference key="3">
    <citation type="submission" date="2002-12" db="EMBL/GenBank/DDBJ databases">
        <authorList>
            <person name="Melton D."/>
            <person name="Brown J."/>
            <person name="Kenty G."/>
            <person name="Permutt A."/>
            <person name="Lee C."/>
            <person name="Kaestner K."/>
            <person name="Lemishka I."/>
            <person name="Scearce M."/>
            <person name="Brestelli J."/>
            <person name="Gradwohl G."/>
            <person name="Clifton S."/>
            <person name="Hillier L."/>
            <person name="Marra M."/>
            <person name="Pape D."/>
            <person name="Wylie T."/>
            <person name="Martin J."/>
            <person name="Blistain A."/>
            <person name="Schmitt A."/>
            <person name="Theising B."/>
            <person name="Ritter E."/>
            <person name="Ronko I."/>
            <person name="Bennett J."/>
            <person name="Cardenas M."/>
            <person name="Gibbons M."/>
            <person name="McCann R."/>
            <person name="Cole R."/>
            <person name="Tsagareishvili R."/>
            <person name="Williams T."/>
            <person name="Jackson Y."/>
            <person name="Bowers Y."/>
        </authorList>
    </citation>
    <scope>NUCLEOTIDE SEQUENCE [LARGE SCALE MRNA] (ISOFORM 4)</scope>
    <source>
        <tissue>Pancreas islet cell</tissue>
    </source>
</reference>
<reference key="4">
    <citation type="submission" date="2003-11" db="EMBL/GenBank/DDBJ databases">
        <authorList>
            <consortium name="SeattleSNPs variation discovery resource"/>
        </authorList>
    </citation>
    <scope>NUCLEOTIDE SEQUENCE [GENOMIC DNA]</scope>
    <scope>VARIANT VAL-143</scope>
</reference>
<reference key="5">
    <citation type="journal article" date="2006" name="Nature">
        <title>The DNA sequence and biological annotation of human chromosome 1.</title>
        <authorList>
            <person name="Gregory S.G."/>
            <person name="Barlow K.F."/>
            <person name="McLay K.E."/>
            <person name="Kaul R."/>
            <person name="Swarbreck D."/>
            <person name="Dunham A."/>
            <person name="Scott C.E."/>
            <person name="Howe K.L."/>
            <person name="Woodfine K."/>
            <person name="Spencer C.C.A."/>
            <person name="Jones M.C."/>
            <person name="Gillson C."/>
            <person name="Searle S."/>
            <person name="Zhou Y."/>
            <person name="Kokocinski F."/>
            <person name="McDonald L."/>
            <person name="Evans R."/>
            <person name="Phillips K."/>
            <person name="Atkinson A."/>
            <person name="Cooper R."/>
            <person name="Jones C."/>
            <person name="Hall R.E."/>
            <person name="Andrews T.D."/>
            <person name="Lloyd C."/>
            <person name="Ainscough R."/>
            <person name="Almeida J.P."/>
            <person name="Ambrose K.D."/>
            <person name="Anderson F."/>
            <person name="Andrew R.W."/>
            <person name="Ashwell R.I.S."/>
            <person name="Aubin K."/>
            <person name="Babbage A.K."/>
            <person name="Bagguley C.L."/>
            <person name="Bailey J."/>
            <person name="Beasley H."/>
            <person name="Bethel G."/>
            <person name="Bird C.P."/>
            <person name="Bray-Allen S."/>
            <person name="Brown J.Y."/>
            <person name="Brown A.J."/>
            <person name="Buckley D."/>
            <person name="Burton J."/>
            <person name="Bye J."/>
            <person name="Carder C."/>
            <person name="Chapman J.C."/>
            <person name="Clark S.Y."/>
            <person name="Clarke G."/>
            <person name="Clee C."/>
            <person name="Cobley V."/>
            <person name="Collier R.E."/>
            <person name="Corby N."/>
            <person name="Coville G.J."/>
            <person name="Davies J."/>
            <person name="Deadman R."/>
            <person name="Dunn M."/>
            <person name="Earthrowl M."/>
            <person name="Ellington A.G."/>
            <person name="Errington H."/>
            <person name="Frankish A."/>
            <person name="Frankland J."/>
            <person name="French L."/>
            <person name="Garner P."/>
            <person name="Garnett J."/>
            <person name="Gay L."/>
            <person name="Ghori M.R.J."/>
            <person name="Gibson R."/>
            <person name="Gilby L.M."/>
            <person name="Gillett W."/>
            <person name="Glithero R.J."/>
            <person name="Grafham D.V."/>
            <person name="Griffiths C."/>
            <person name="Griffiths-Jones S."/>
            <person name="Grocock R."/>
            <person name="Hammond S."/>
            <person name="Harrison E.S.I."/>
            <person name="Hart E."/>
            <person name="Haugen E."/>
            <person name="Heath P.D."/>
            <person name="Holmes S."/>
            <person name="Holt K."/>
            <person name="Howden P.J."/>
            <person name="Hunt A.R."/>
            <person name="Hunt S.E."/>
            <person name="Hunter G."/>
            <person name="Isherwood J."/>
            <person name="James R."/>
            <person name="Johnson C."/>
            <person name="Johnson D."/>
            <person name="Joy A."/>
            <person name="Kay M."/>
            <person name="Kershaw J.K."/>
            <person name="Kibukawa M."/>
            <person name="Kimberley A.M."/>
            <person name="King A."/>
            <person name="Knights A.J."/>
            <person name="Lad H."/>
            <person name="Laird G."/>
            <person name="Lawlor S."/>
            <person name="Leongamornlert D.A."/>
            <person name="Lloyd D.M."/>
            <person name="Loveland J."/>
            <person name="Lovell J."/>
            <person name="Lush M.J."/>
            <person name="Lyne R."/>
            <person name="Martin S."/>
            <person name="Mashreghi-Mohammadi M."/>
            <person name="Matthews L."/>
            <person name="Matthews N.S.W."/>
            <person name="McLaren S."/>
            <person name="Milne S."/>
            <person name="Mistry S."/>
            <person name="Moore M.J.F."/>
            <person name="Nickerson T."/>
            <person name="O'Dell C.N."/>
            <person name="Oliver K."/>
            <person name="Palmeiri A."/>
            <person name="Palmer S.A."/>
            <person name="Parker A."/>
            <person name="Patel D."/>
            <person name="Pearce A.V."/>
            <person name="Peck A.I."/>
            <person name="Pelan S."/>
            <person name="Phelps K."/>
            <person name="Phillimore B.J."/>
            <person name="Plumb R."/>
            <person name="Rajan J."/>
            <person name="Raymond C."/>
            <person name="Rouse G."/>
            <person name="Saenphimmachak C."/>
            <person name="Sehra H.K."/>
            <person name="Sheridan E."/>
            <person name="Shownkeen R."/>
            <person name="Sims S."/>
            <person name="Skuce C.D."/>
            <person name="Smith M."/>
            <person name="Steward C."/>
            <person name="Subramanian S."/>
            <person name="Sycamore N."/>
            <person name="Tracey A."/>
            <person name="Tromans A."/>
            <person name="Van Helmond Z."/>
            <person name="Wall M."/>
            <person name="Wallis J.M."/>
            <person name="White S."/>
            <person name="Whitehead S.L."/>
            <person name="Wilkinson J.E."/>
            <person name="Willey D.L."/>
            <person name="Williams H."/>
            <person name="Wilming L."/>
            <person name="Wray P.W."/>
            <person name="Wu Z."/>
            <person name="Coulson A."/>
            <person name="Vaudin M."/>
            <person name="Sulston J.E."/>
            <person name="Durbin R.M."/>
            <person name="Hubbard T."/>
            <person name="Wooster R."/>
            <person name="Dunham I."/>
            <person name="Carter N.P."/>
            <person name="McVean G."/>
            <person name="Ross M.T."/>
            <person name="Harrow J."/>
            <person name="Olson M.V."/>
            <person name="Beck S."/>
            <person name="Rogers J."/>
            <person name="Bentley D.R."/>
        </authorList>
    </citation>
    <scope>NUCLEOTIDE SEQUENCE [LARGE SCALE GENOMIC DNA]</scope>
</reference>
<reference key="6">
    <citation type="submission" date="2005-07" db="EMBL/GenBank/DDBJ databases">
        <authorList>
            <person name="Mural R.J."/>
            <person name="Istrail S."/>
            <person name="Sutton G.G."/>
            <person name="Florea L."/>
            <person name="Halpern A.L."/>
            <person name="Mobarry C.M."/>
            <person name="Lippert R."/>
            <person name="Walenz B."/>
            <person name="Shatkay H."/>
            <person name="Dew I."/>
            <person name="Miller J.R."/>
            <person name="Flanigan M.J."/>
            <person name="Edwards N.J."/>
            <person name="Bolanos R."/>
            <person name="Fasulo D."/>
            <person name="Halldorsson B.V."/>
            <person name="Hannenhalli S."/>
            <person name="Turner R."/>
            <person name="Yooseph S."/>
            <person name="Lu F."/>
            <person name="Nusskern D.R."/>
            <person name="Shue B.C."/>
            <person name="Zheng X.H."/>
            <person name="Zhong F."/>
            <person name="Delcher A.L."/>
            <person name="Huson D.H."/>
            <person name="Kravitz S.A."/>
            <person name="Mouchard L."/>
            <person name="Reinert K."/>
            <person name="Remington K.A."/>
            <person name="Clark A.G."/>
            <person name="Waterman M.S."/>
            <person name="Eichler E.E."/>
            <person name="Adams M.D."/>
            <person name="Hunkapiller M.W."/>
            <person name="Myers E.W."/>
            <person name="Venter J.C."/>
        </authorList>
    </citation>
    <scope>NUCLEOTIDE SEQUENCE [LARGE SCALE GENOMIC DNA]</scope>
</reference>
<reference key="7">
    <citation type="journal article" date="2004" name="Genome Res.">
        <title>The status, quality, and expansion of the NIH full-length cDNA project: the Mammalian Gene Collection (MGC).</title>
        <authorList>
            <consortium name="The MGC Project Team"/>
        </authorList>
    </citation>
    <scope>NUCLEOTIDE SEQUENCE [LARGE SCALE MRNA] (ISOFORMS 2 AND 5)</scope>
    <source>
        <tissue>Colon</tissue>
        <tissue>Eye</tissue>
    </source>
</reference>
<reference key="8">
    <citation type="journal article" date="2003" name="Mol. Biol. Cell">
        <title>The angiotensin II type I receptor-associated protein, ATRAP, is a transmembrane protein and a modulator of angiotensin II signaling.</title>
        <authorList>
            <person name="Lopez-Ilasaca M."/>
            <person name="Liu X."/>
            <person name="Tamura K."/>
            <person name="Dzau V.J."/>
        </authorList>
    </citation>
    <scope>FUNCTION</scope>
    <scope>SUBCELLULAR LOCATION</scope>
    <scope>INTERACTION WITH AGTR1</scope>
</reference>
<reference key="9">
    <citation type="journal article" date="2011" name="BMC Syst. Biol.">
        <title>Initial characterization of the human central proteome.</title>
        <authorList>
            <person name="Burkard T.R."/>
            <person name="Planyavsky M."/>
            <person name="Kaupe I."/>
            <person name="Breitwieser F.P."/>
            <person name="Buerckstuemmer T."/>
            <person name="Bennett K.L."/>
            <person name="Superti-Furga G."/>
            <person name="Colinge J."/>
        </authorList>
    </citation>
    <scope>IDENTIFICATION BY MASS SPECTROMETRY [LARGE SCALE ANALYSIS]</scope>
</reference>
<reference key="10">
    <citation type="journal article" date="2013" name="J. Proteome Res.">
        <title>Toward a comprehensive characterization of a human cancer cell phosphoproteome.</title>
        <authorList>
            <person name="Zhou H."/>
            <person name="Di Palma S."/>
            <person name="Preisinger C."/>
            <person name="Peng M."/>
            <person name="Polat A.N."/>
            <person name="Heck A.J."/>
            <person name="Mohammed S."/>
        </authorList>
    </citation>
    <scope>PHOSPHORYLATION [LARGE SCALE ANALYSIS] AT SER-126; SER-127; THR-135; SER-138 AND SER-153</scope>
    <scope>IDENTIFICATION BY MASS SPECTROMETRY [LARGE SCALE ANALYSIS]</scope>
    <source>
        <tissue>Cervix carcinoma</tissue>
        <tissue>Erythroleukemia</tissue>
    </source>
</reference>
<reference key="11">
    <citation type="journal article" date="2015" name="Proteomics">
        <title>N-terminome analysis of the human mitochondrial proteome.</title>
        <authorList>
            <person name="Vaca Jacome A.S."/>
            <person name="Rabilloud T."/>
            <person name="Schaeffer-Reiss C."/>
            <person name="Rompais M."/>
            <person name="Ayoub D."/>
            <person name="Lane L."/>
            <person name="Bairoch A."/>
            <person name="Van Dorsselaer A."/>
            <person name="Carapito C."/>
        </authorList>
    </citation>
    <scope>IDENTIFICATION BY MASS SPECTROMETRY [LARGE SCALE ANALYSIS]</scope>
</reference>
<comment type="function">
    <text evidence="4">Appears to be a negative regulator of type-1 angiotensin II receptor-mediated signaling by regulating receptor internalization as well as mechanism of receptor desensitization such as phosphorylation. Also induces a decrease in cell proliferation and angiotensin II-stimulated transcriptional activity.</text>
</comment>
<comment type="subunit">
    <text evidence="3 4">Interacts with RACK1, and with the C-terminal region of AGTR1.</text>
</comment>
<comment type="interaction">
    <interactant intactId="EBI-741181">
        <id>Q6RW13</id>
    </interactant>
    <interactant intactId="EBI-2876502">
        <id>Q96CM8</id>
        <label>ACSF2</label>
    </interactant>
    <organismsDiffer>false</organismsDiffer>
    <experiments>4</experiments>
</comment>
<comment type="interaction">
    <interactant intactId="EBI-741181">
        <id>Q6RW13</id>
    </interactant>
    <interactant intactId="EBI-1210304">
        <id>P54886</id>
        <label>ALDH18A1</label>
    </interactant>
    <organismsDiffer>false</organismsDiffer>
    <experiments>3</experiments>
</comment>
<comment type="interaction">
    <interactant intactId="EBI-741181">
        <id>Q6RW13</id>
    </interactant>
    <interactant intactId="EBI-2371151">
        <id>Q9Y2T2</id>
        <label>AP3M1</label>
    </interactant>
    <organismsDiffer>false</organismsDiffer>
    <experiments>3</experiments>
</comment>
<comment type="interaction">
    <interactant intactId="EBI-741181">
        <id>Q6RW13</id>
    </interactant>
    <interactant intactId="EBI-9383168">
        <id>Q96II5</id>
        <label>ARAF</label>
    </interactant>
    <organismsDiffer>false</organismsDiffer>
    <experiments>3</experiments>
</comment>
<comment type="interaction">
    <interactant intactId="EBI-741181">
        <id>Q6RW13</id>
    </interactant>
    <interactant intactId="EBI-638194">
        <id>P53365</id>
        <label>ARFIP2</label>
    </interactant>
    <organismsDiffer>false</organismsDiffer>
    <experiments>4</experiments>
</comment>
<comment type="interaction">
    <interactant intactId="EBI-741181">
        <id>Q6RW13</id>
    </interactant>
    <interactant intactId="EBI-10284754">
        <id>Q96DR5</id>
        <label>BPIFA2</label>
    </interactant>
    <organismsDiffer>false</organismsDiffer>
    <experiments>3</experiments>
</comment>
<comment type="interaction">
    <interactant intactId="EBI-741181">
        <id>Q6RW13</id>
    </interactant>
    <interactant intactId="EBI-711828">
        <id>P04632</id>
        <label>CAPNS1</label>
    </interactant>
    <organismsDiffer>false</organismsDiffer>
    <experiments>3</experiments>
</comment>
<comment type="interaction">
    <interactant intactId="EBI-741181">
        <id>Q6RW13</id>
    </interactant>
    <interactant intactId="EBI-4314390">
        <id>O95971</id>
        <label>CD160</label>
    </interactant>
    <organismsDiffer>false</organismsDiffer>
    <experiments>3</experiments>
</comment>
<comment type="interaction">
    <interactant intactId="EBI-741181">
        <id>Q6RW13</id>
    </interactant>
    <interactant intactId="EBI-745535">
        <id>Q8NI60</id>
        <label>COQ8A</label>
    </interactant>
    <organismsDiffer>false</organismsDiffer>
    <experiments>4</experiments>
</comment>
<comment type="interaction">
    <interactant intactId="EBI-741181">
        <id>Q6RW13</id>
    </interactant>
    <interactant intactId="EBI-713677">
        <id>Q9UGL9</id>
        <label>CRCT1</label>
    </interactant>
    <organismsDiffer>false</organismsDiffer>
    <experiments>3</experiments>
</comment>
<comment type="interaction">
    <interactant intactId="EBI-741181">
        <id>Q6RW13</id>
    </interactant>
    <interactant intactId="EBI-2510241">
        <id>Q9BW61</id>
        <label>DDA1</label>
    </interactant>
    <organismsDiffer>false</organismsDiffer>
    <experiments>3</experiments>
</comment>
<comment type="interaction">
    <interactant intactId="EBI-741181">
        <id>Q6RW13</id>
    </interactant>
    <interactant intactId="EBI-5459844">
        <id>Q8NHQ9</id>
        <label>DDX55</label>
    </interactant>
    <organismsDiffer>false</organismsDiffer>
    <experiments>3</experiments>
</comment>
<comment type="interaction">
    <interactant intactId="EBI-741181">
        <id>Q6RW13</id>
    </interactant>
    <interactant intactId="EBI-521451">
        <id>Q5VYK3</id>
        <label>ECPAS</label>
    </interactant>
    <organismsDiffer>false</organismsDiffer>
    <experiments>3</experiments>
</comment>
<comment type="interaction">
    <interactant intactId="EBI-741181">
        <id>Q6RW13</id>
    </interactant>
    <interactant intactId="EBI-2686288">
        <id>Q8IWE2</id>
        <label>FAM114A1</label>
    </interactant>
    <organismsDiffer>false</organismsDiffer>
    <experiments>3</experiments>
</comment>
<comment type="interaction">
    <interactant intactId="EBI-741181">
        <id>Q6RW13</id>
    </interactant>
    <interactant intactId="EBI-2513774">
        <id>O95363</id>
        <label>FARS2</label>
    </interactant>
    <organismsDiffer>false</organismsDiffer>
    <experiments>3</experiments>
</comment>
<comment type="interaction">
    <interactant intactId="EBI-741181">
        <id>Q6RW13</id>
    </interactant>
    <interactant intactId="EBI-10234819">
        <id>Q14CZ7</id>
        <label>FASTKD3</label>
    </interactant>
    <organismsDiffer>false</organismsDiffer>
    <experiments>3</experiments>
</comment>
<comment type="interaction">
    <interactant intactId="EBI-741181">
        <id>Q6RW13</id>
    </interactant>
    <interactant intactId="EBI-743099">
        <id>Q969F0</id>
        <label>FATE1</label>
    </interactant>
    <organismsDiffer>false</organismsDiffer>
    <experiments>3</experiments>
</comment>
<comment type="interaction">
    <interactant intactId="EBI-741181">
        <id>Q6RW13</id>
    </interactant>
    <interactant intactId="EBI-742137">
        <id>Q8N612</id>
        <label>FHIP1B</label>
    </interactant>
    <organismsDiffer>false</organismsDiffer>
    <experiments>3</experiments>
</comment>
<comment type="interaction">
    <interactant intactId="EBI-741181">
        <id>Q6RW13</id>
    </interactant>
    <interactant intactId="EBI-720116">
        <id>P60520</id>
        <label>GABARAPL2</label>
    </interactant>
    <organismsDiffer>false</organismsDiffer>
    <experiments>3</experiments>
</comment>
<comment type="interaction">
    <interactant intactId="EBI-741181">
        <id>Q6RW13</id>
    </interactant>
    <interactant intactId="EBI-10209663">
        <id>Q8IVA8</id>
        <label>GAD1</label>
    </interactant>
    <organismsDiffer>false</organismsDiffer>
    <experiments>3</experiments>
</comment>
<comment type="interaction">
    <interactant intactId="EBI-741181">
        <id>Q6RW13</id>
    </interactant>
    <interactant intactId="EBI-743184">
        <id>Q99259</id>
        <label>GAD1</label>
    </interactant>
    <organismsDiffer>false</organismsDiffer>
    <experiments>3</experiments>
</comment>
<comment type="interaction">
    <interactant intactId="EBI-741181">
        <id>Q6RW13</id>
    </interactant>
    <interactant intactId="EBI-9304251">
        <id>Q05329</id>
        <label>GAD2</label>
    </interactant>
    <organismsDiffer>false</organismsDiffer>
    <experiments>3</experiments>
</comment>
<comment type="interaction">
    <interactant intactId="EBI-741181">
        <id>Q6RW13</id>
    </interactant>
    <interactant intactId="EBI-10207709">
        <id>P39905</id>
        <label>GDNF</label>
    </interactant>
    <organismsDiffer>false</organismsDiffer>
    <experiments>3</experiments>
</comment>
<comment type="interaction">
    <interactant intactId="EBI-741181">
        <id>Q6RW13</id>
    </interactant>
    <interactant intactId="EBI-357956">
        <id>Q12789</id>
        <label>GTF3C1</label>
    </interactant>
    <organismsDiffer>false</organismsDiffer>
    <experiments>3</experiments>
</comment>
<comment type="interaction">
    <interactant intactId="EBI-741181">
        <id>Q6RW13</id>
    </interactant>
    <interactant intactId="EBI-10294329">
        <id>Q99525</id>
        <label>H4C7</label>
    </interactant>
    <organismsDiffer>false</organismsDiffer>
    <experiments>3</experiments>
</comment>
<comment type="interaction">
    <interactant intactId="EBI-741181">
        <id>Q6RW13</id>
    </interactant>
    <interactant intactId="EBI-3909030">
        <id>P49590</id>
        <label>HARS2</label>
    </interactant>
    <organismsDiffer>false</organismsDiffer>
    <experiments>3</experiments>
</comment>
<comment type="interaction">
    <interactant intactId="EBI-741181">
        <id>Q6RW13</id>
    </interactant>
    <interactant intactId="EBI-389432">
        <id>P09429</id>
        <label>HMGB1</label>
    </interactant>
    <organismsDiffer>false</organismsDiffer>
    <experiments>3</experiments>
</comment>
<comment type="interaction">
    <interactant intactId="EBI-741181">
        <id>Q6RW13</id>
    </interactant>
    <interactant intactId="EBI-1805738">
        <id>Q8IWL3</id>
        <label>HSCB</label>
    </interactant>
    <organismsDiffer>false</organismsDiffer>
    <experiments>4</experiments>
</comment>
<comment type="interaction">
    <interactant intactId="EBI-741181">
        <id>Q6RW13</id>
    </interactant>
    <interactant intactId="EBI-356933">
        <id>P34932</id>
        <label>HSPA4</label>
    </interactant>
    <organismsDiffer>false</organismsDiffer>
    <experiments>3</experiments>
</comment>
<comment type="interaction">
    <interactant intactId="EBI-741181">
        <id>Q6RW13</id>
    </interactant>
    <interactant intactId="EBI-1047335">
        <id>Q9H1K1</id>
        <label>ISCU</label>
    </interactant>
    <organismsDiffer>false</organismsDiffer>
    <experiments>3</experiments>
</comment>
<comment type="interaction">
    <interactant intactId="EBI-741181">
        <id>Q6RW13</id>
    </interactant>
    <interactant intactId="EBI-739696">
        <id>P25791</id>
        <label>LMO2</label>
    </interactant>
    <organismsDiffer>false</organismsDiffer>
    <experiments>3</experiments>
</comment>
<comment type="interaction">
    <interactant intactId="EBI-741181">
        <id>Q6RW13</id>
    </interactant>
    <interactant intactId="EBI-739832">
        <id>Q8TBB1</id>
        <label>LNX1</label>
    </interactant>
    <organismsDiffer>false</organismsDiffer>
    <experiments>3</experiments>
</comment>
<comment type="interaction">
    <interactant intactId="EBI-741181">
        <id>Q6RW13</id>
    </interactant>
    <interactant intactId="EBI-10292326">
        <id>Q96PE7</id>
        <label>MCEE</label>
    </interactant>
    <organismsDiffer>false</organismsDiffer>
    <experiments>4</experiments>
</comment>
<comment type="interaction">
    <interactant intactId="EBI-741181">
        <id>Q6RW13</id>
    </interactant>
    <interactant intactId="EBI-740987">
        <id>Q9NQG6</id>
        <label>MIEF1</label>
    </interactant>
    <organismsDiffer>false</organismsDiffer>
    <experiments>3</experiments>
</comment>
<comment type="interaction">
    <interactant intactId="EBI-741181">
        <id>Q6RW13</id>
    </interactant>
    <interactant intactId="EBI-750153">
        <id>Q96C03</id>
        <label>MIEF2</label>
    </interactant>
    <organismsDiffer>false</organismsDiffer>
    <experiments>3</experiments>
</comment>
<comment type="interaction">
    <interactant intactId="EBI-741181">
        <id>Q6RW13</id>
    </interactant>
    <interactant intactId="EBI-5454865">
        <id>Q6IN84</id>
        <label>MRM1</label>
    </interactant>
    <organismsDiffer>false</organismsDiffer>
    <experiments>3</experiments>
</comment>
<comment type="interaction">
    <interactant intactId="EBI-741181">
        <id>Q6RW13</id>
    </interactant>
    <interactant intactId="EBI-7825321">
        <id>Q96E29</id>
        <label>MTERF3</label>
    </interactant>
    <organismsDiffer>false</organismsDiffer>
    <experiments>3</experiments>
</comment>
<comment type="interaction">
    <interactant intactId="EBI-741181">
        <id>Q6RW13</id>
    </interactant>
    <interactant intactId="EBI-10321956">
        <id>Q9UIF7-3</id>
        <label>MUTYH</label>
    </interactant>
    <organismsDiffer>false</organismsDiffer>
    <experiments>3</experiments>
</comment>
<comment type="interaction">
    <interactant intactId="EBI-741181">
        <id>Q6RW13</id>
    </interactant>
    <interactant intactId="EBI-709754">
        <id>Q9HB07</id>
        <label>MYG1</label>
    </interactant>
    <organismsDiffer>false</organismsDiffer>
    <experiments>4</experiments>
</comment>
<comment type="interaction">
    <interactant intactId="EBI-741181">
        <id>Q6RW13</id>
    </interactant>
    <interactant intactId="EBI-10323810">
        <id>Q9ULP0</id>
        <label>NDRG4</label>
    </interactant>
    <organismsDiffer>false</organismsDiffer>
    <experiments>3</experiments>
</comment>
<comment type="interaction">
    <interactant intactId="EBI-741181">
        <id>Q6RW13</id>
    </interactant>
    <interactant intactId="EBI-725252">
        <id>Q9UMS0</id>
        <label>NFU1</label>
    </interactant>
    <organismsDiffer>false</organismsDiffer>
    <experiments>3</experiments>
</comment>
<comment type="interaction">
    <interactant intactId="EBI-741181">
        <id>Q6RW13</id>
    </interactant>
    <interactant intactId="EBI-389728">
        <id>P25208</id>
        <label>NFYB</label>
    </interactant>
    <organismsDiffer>false</organismsDiffer>
    <experiments>3</experiments>
</comment>
<comment type="interaction">
    <interactant intactId="EBI-741181">
        <id>Q6RW13</id>
    </interactant>
    <interactant intactId="EBI-3919611">
        <id>Q16617</id>
        <label>NKG7</label>
    </interactant>
    <organismsDiffer>false</organismsDiffer>
    <experiments>3</experiments>
</comment>
<comment type="interaction">
    <interactant intactId="EBI-741181">
        <id>Q6RW13</id>
    </interactant>
    <interactant intactId="EBI-10244393">
        <id>Q5JS98</id>
        <label>PBX3</label>
    </interactant>
    <organismsDiffer>false</organismsDiffer>
    <experiments>3</experiments>
</comment>
<comment type="interaction">
    <interactant intactId="EBI-741181">
        <id>Q6RW13</id>
    </interactant>
    <interactant intactId="EBI-741171">
        <id>Q96AL5</id>
        <label>PBX3</label>
    </interactant>
    <organismsDiffer>false</organismsDiffer>
    <experiments>3</experiments>
</comment>
<comment type="interaction">
    <interactant intactId="EBI-741181">
        <id>Q6RW13</id>
    </interactant>
    <interactant intactId="EBI-4402391">
        <id>Q9UKL6</id>
        <label>PCTP</label>
    </interactant>
    <organismsDiffer>false</organismsDiffer>
    <experiments>3</experiments>
</comment>
<comment type="interaction">
    <interactant intactId="EBI-741181">
        <id>Q6RW13</id>
    </interactant>
    <interactant intactId="EBI-751566">
        <id>O00330</id>
        <label>PDHX</label>
    </interactant>
    <organismsDiffer>false</organismsDiffer>
    <experiments>5</experiments>
</comment>
<comment type="interaction">
    <interactant intactId="EBI-741181">
        <id>Q6RW13</id>
    </interactant>
    <interactant intactId="EBI-2568609">
        <id>Q9BSJ6</id>
        <label>PIMREG</label>
    </interactant>
    <organismsDiffer>false</organismsDiffer>
    <experiments>3</experiments>
</comment>
<comment type="interaction">
    <interactant intactId="EBI-741181">
        <id>Q6RW13</id>
    </interactant>
    <interactant intactId="EBI-749241">
        <id>Q9UKF7</id>
        <label>PITPNC1</label>
    </interactant>
    <organismsDiffer>false</organismsDiffer>
    <experiments>6</experiments>
</comment>
<comment type="interaction">
    <interactant intactId="EBI-741181">
        <id>Q6RW13</id>
    </interactant>
    <interactant intactId="EBI-742898">
        <id>P43378</id>
        <label>PTPN9</label>
    </interactant>
    <organismsDiffer>false</organismsDiffer>
    <experiments>5</experiments>
</comment>
<comment type="interaction">
    <interactant intactId="EBI-741181">
        <id>Q6RW13</id>
    </interactant>
    <interactant intactId="EBI-10250413">
        <id>Q6IQ43</id>
        <label>PTPN9</label>
    </interactant>
    <organismsDiffer>false</organismsDiffer>
    <experiments>3</experiments>
</comment>
<comment type="interaction">
    <interactant intactId="EBI-741181">
        <id>Q6RW13</id>
    </interactant>
    <interactant intactId="EBI-2806908">
        <id>Q96LZ7</id>
        <label>RMDN2</label>
    </interactant>
    <organismsDiffer>false</organismsDiffer>
    <experiments>3</experiments>
</comment>
<comment type="interaction">
    <interactant intactId="EBI-741181">
        <id>Q6RW13</id>
    </interactant>
    <interactant intactId="EBI-714881">
        <id>Q9HC62</id>
        <label>SENP2</label>
    </interactant>
    <organismsDiffer>false</organismsDiffer>
    <experiments>3</experiments>
</comment>
<comment type="interaction">
    <interactant intactId="EBI-741181">
        <id>Q6RW13</id>
    </interactant>
    <interactant intactId="EBI-2822329">
        <id>Q13596</id>
        <label>SNX1</label>
    </interactant>
    <organismsDiffer>false</organismsDiffer>
    <experiments>3</experiments>
</comment>
<comment type="interaction">
    <interactant intactId="EBI-741181">
        <id>Q6RW13</id>
    </interactant>
    <interactant intactId="EBI-742688">
        <id>Q9NZD8</id>
        <label>SPG21</label>
    </interactant>
    <organismsDiffer>false</organismsDiffer>
    <experiments>5</experiments>
</comment>
<comment type="interaction">
    <interactant intactId="EBI-741181">
        <id>Q6RW13</id>
    </interactant>
    <interactant intactId="EBI-10295431">
        <id>Q99909</id>
        <label>SSX3</label>
    </interactant>
    <organismsDiffer>false</organismsDiffer>
    <experiments>3</experiments>
</comment>
<comment type="interaction">
    <interactant intactId="EBI-741181">
        <id>Q6RW13</id>
    </interactant>
    <interactant intactId="EBI-10186198">
        <id>O60225</id>
        <label>SSX5</label>
    </interactant>
    <organismsDiffer>false</organismsDiffer>
    <experiments>5</experiments>
</comment>
<comment type="interaction">
    <interactant intactId="EBI-741181">
        <id>Q6RW13</id>
    </interactant>
    <interactant intactId="EBI-10255998">
        <id>Q7L1H2</id>
        <label>STAG3L1</label>
    </interactant>
    <organismsDiffer>false</organismsDiffer>
    <experiments>3</experiments>
</comment>
<comment type="interaction">
    <interactant intactId="EBI-741181">
        <id>Q6RW13</id>
    </interactant>
    <interactant intactId="EBI-10176959">
        <id>E5KS60</id>
        <label>SUCLA2</label>
    </interactant>
    <organismsDiffer>false</organismsDiffer>
    <experiments>3</experiments>
</comment>
<comment type="interaction">
    <interactant intactId="EBI-741181">
        <id>Q6RW13</id>
    </interactant>
    <interactant intactId="EBI-10238936">
        <id>Q17RD7</id>
        <label>SYT16</label>
    </interactant>
    <organismsDiffer>false</organismsDiffer>
    <experiments>5</experiments>
</comment>
<comment type="interaction">
    <interactant intactId="EBI-741181">
        <id>Q6RW13</id>
    </interactant>
    <interactant intactId="EBI-702328">
        <id>Q969Z0</id>
        <label>TBRG4</label>
    </interactant>
    <organismsDiffer>false</organismsDiffer>
    <experiments>3</experiments>
</comment>
<comment type="interaction">
    <interactant intactId="EBI-741181">
        <id>Q6RW13</id>
    </interactant>
    <interactant intactId="EBI-5462748">
        <id>Q96MN5</id>
        <label>TCEANC2</label>
    </interactant>
    <organismsDiffer>false</organismsDiffer>
    <experiments>3</experiments>
</comment>
<comment type="interaction">
    <interactant intactId="EBI-741181">
        <id>Q6RW13</id>
    </interactant>
    <interactant intactId="EBI-1049924">
        <id>Q00059</id>
        <label>TFAM</label>
    </interactant>
    <organismsDiffer>false</organismsDiffer>
    <experiments>3</experiments>
</comment>
<comment type="interaction">
    <interactant intactId="EBI-741181">
        <id>Q6RW13</id>
    </interactant>
    <interactant intactId="EBI-932162">
        <id>Q96J77</id>
        <label>TPD52L3</label>
    </interactant>
    <organismsDiffer>false</organismsDiffer>
    <experiments>3</experiments>
</comment>
<comment type="interaction">
    <interactant intactId="EBI-741181">
        <id>Q6RW13</id>
    </interactant>
    <interactant intactId="EBI-487083">
        <id>P68363</id>
        <label>TUBA1B</label>
    </interactant>
    <organismsDiffer>false</organismsDiffer>
    <experiments>3</experiments>
</comment>
<comment type="interaction">
    <interactant intactId="EBI-741181">
        <id>Q6RW13</id>
    </interactant>
    <interactant intactId="EBI-2932492">
        <id>Q99757</id>
        <label>TXN2</label>
    </interactant>
    <organismsDiffer>false</organismsDiffer>
    <experiments>3</experiments>
</comment>
<comment type="interaction">
    <interactant intactId="EBI-741181">
        <id>Q6RW13</id>
    </interactant>
    <interactant intactId="EBI-2849569">
        <id>Q9BQ24</id>
        <label>ZFYVE21</label>
    </interactant>
    <organismsDiffer>false</organismsDiffer>
    <experiments>3</experiments>
</comment>
<comment type="interaction">
    <interactant intactId="EBI-11522760">
        <id>Q6RW13-2</id>
    </interactant>
    <interactant intactId="EBI-11522760">
        <id>Q6RW13-2</id>
        <label>AGTRAP</label>
    </interactant>
    <organismsDiffer>false</organismsDiffer>
    <experiments>3</experiments>
</comment>
<comment type="interaction">
    <interactant intactId="EBI-11522760">
        <id>Q6RW13-2</id>
    </interactant>
    <interactant intactId="EBI-7054139">
        <id>Q68DC2</id>
        <label>ANKS6</label>
    </interactant>
    <organismsDiffer>false</organismsDiffer>
    <experiments>3</experiments>
</comment>
<comment type="interaction">
    <interactant intactId="EBI-11522760">
        <id>Q6RW13-2</id>
    </interactant>
    <interactant intactId="EBI-2371151">
        <id>Q9Y2T2</id>
        <label>AP3M1</label>
    </interactant>
    <organismsDiffer>false</organismsDiffer>
    <experiments>3</experiments>
</comment>
<comment type="interaction">
    <interactant intactId="EBI-11522760">
        <id>Q6RW13-2</id>
    </interactant>
    <interactant intactId="EBI-1222447">
        <id>P06727</id>
        <label>APOA4</label>
    </interactant>
    <organismsDiffer>false</organismsDiffer>
    <experiments>3</experiments>
</comment>
<comment type="interaction">
    <interactant intactId="EBI-11522760">
        <id>Q6RW13-2</id>
    </interactant>
    <interactant intactId="EBI-13059134">
        <id>Q13520</id>
        <label>AQP6</label>
    </interactant>
    <organismsDiffer>false</organismsDiffer>
    <experiments>3</experiments>
</comment>
<comment type="interaction">
    <interactant intactId="EBI-11522760">
        <id>Q6RW13-2</id>
    </interactant>
    <interactant intactId="EBI-638194">
        <id>P53365</id>
        <label>ARFIP2</label>
    </interactant>
    <organismsDiffer>false</organismsDiffer>
    <experiments>3</experiments>
</comment>
<comment type="interaction">
    <interactant intactId="EBI-11522760">
        <id>Q6RW13-2</id>
    </interactant>
    <interactant intactId="EBI-3904845">
        <id>P56381</id>
        <label>ATP5F1E</label>
    </interactant>
    <organismsDiffer>false</organismsDiffer>
    <experiments>3</experiments>
</comment>
<comment type="interaction">
    <interactant intactId="EBI-11522760">
        <id>Q6RW13-2</id>
    </interactant>
    <interactant intactId="EBI-747430">
        <id>Q9BXK5</id>
        <label>BCL2L13</label>
    </interactant>
    <organismsDiffer>false</organismsDiffer>
    <experiments>3</experiments>
</comment>
<comment type="interaction">
    <interactant intactId="EBI-11522760">
        <id>Q6RW13-2</id>
    </interactant>
    <interactant intactId="EBI-10284754">
        <id>Q96DR5</id>
        <label>BPIFA2</label>
    </interactant>
    <organismsDiffer>false</organismsDiffer>
    <experiments>3</experiments>
</comment>
<comment type="interaction">
    <interactant intactId="EBI-11522760">
        <id>Q6RW13-2</id>
    </interactant>
    <interactant intactId="EBI-6873045">
        <id>Q6NSX1</id>
        <label>CCDC70</label>
    </interactant>
    <organismsDiffer>false</organismsDiffer>
    <experiments>3</experiments>
</comment>
<comment type="interaction">
    <interactant intactId="EBI-11522760">
        <id>Q6RW13-2</id>
    </interactant>
    <interactant intactId="EBI-7797864">
        <id>P11912</id>
        <label>CD79A</label>
    </interactant>
    <organismsDiffer>false</organismsDiffer>
    <experiments>3</experiments>
</comment>
<comment type="interaction">
    <interactant intactId="EBI-11522760">
        <id>Q6RW13-2</id>
    </interactant>
    <interactant intactId="EBI-8646391">
        <id>P09093</id>
        <label>CELA3A</label>
    </interactant>
    <organismsDiffer>false</organismsDiffer>
    <experiments>3</experiments>
</comment>
<comment type="interaction">
    <interactant intactId="EBI-11522760">
        <id>Q6RW13-2</id>
    </interactant>
    <interactant intactId="EBI-745535">
        <id>Q8NI60</id>
        <label>COQ8A</label>
    </interactant>
    <organismsDiffer>false</organismsDiffer>
    <experiments>6</experiments>
</comment>
<comment type="interaction">
    <interactant intactId="EBI-11522760">
        <id>Q6RW13-2</id>
    </interactant>
    <interactant intactId="EBI-18013275">
        <id>Q7Z7G2</id>
        <label>CPLX4</label>
    </interactant>
    <organismsDiffer>false</organismsDiffer>
    <experiments>3</experiments>
</comment>
<comment type="interaction">
    <interactant intactId="EBI-11522760">
        <id>Q6RW13-2</id>
    </interactant>
    <interactant intactId="EBI-1046040">
        <id>P00387</id>
        <label>CYB5R3</label>
    </interactant>
    <organismsDiffer>false</organismsDiffer>
    <experiments>3</experiments>
</comment>
<comment type="interaction">
    <interactant intactId="EBI-11522760">
        <id>Q6RW13-2</id>
    </interactant>
    <interactant intactId="EBI-2680384">
        <id>Q9BQA9</id>
        <label>CYBC1</label>
    </interactant>
    <organismsDiffer>false</organismsDiffer>
    <experiments>3</experiments>
</comment>
<comment type="interaction">
    <interactant intactId="EBI-11522760">
        <id>Q6RW13-2</id>
    </interactant>
    <interactant intactId="EBI-517508">
        <id>Q9NR28</id>
        <label>DIABLO</label>
    </interactant>
    <organismsDiffer>false</organismsDiffer>
    <experiments>6</experiments>
</comment>
<comment type="interaction">
    <interactant intactId="EBI-11522760">
        <id>Q6RW13-2</id>
    </interactant>
    <interactant intactId="EBI-296550">
        <id>Q96KC8</id>
        <label>DNAJC1</label>
    </interactant>
    <organismsDiffer>false</organismsDiffer>
    <experiments>3</experiments>
</comment>
<comment type="interaction">
    <interactant intactId="EBI-11522760">
        <id>Q6RW13-2</id>
    </interactant>
    <interactant intactId="EBI-521451">
        <id>Q5VYK3</id>
        <label>ECPAS</label>
    </interactant>
    <organismsDiffer>false</organismsDiffer>
    <experiments>3</experiments>
</comment>
<comment type="interaction">
    <interactant intactId="EBI-11522760">
        <id>Q6RW13-2</id>
    </interactant>
    <interactant intactId="EBI-781551">
        <id>Q9Y282</id>
        <label>ERGIC3</label>
    </interactant>
    <organismsDiffer>false</organismsDiffer>
    <experiments>3</experiments>
</comment>
<comment type="interaction">
    <interactant intactId="EBI-11522760">
        <id>Q6RW13-2</id>
    </interactant>
    <interactant intactId="EBI-12292149">
        <id>Q6IPR1</id>
        <label>ETFRF1</label>
    </interactant>
    <organismsDiffer>false</organismsDiffer>
    <experiments>3</experiments>
</comment>
<comment type="interaction">
    <interactant intactId="EBI-11522760">
        <id>Q6RW13-2</id>
    </interactant>
    <interactant intactId="EBI-18304435">
        <id>Q5JX71</id>
        <label>FAM209A</label>
    </interactant>
    <organismsDiffer>false</organismsDiffer>
    <experiments>3</experiments>
</comment>
<comment type="interaction">
    <interactant intactId="EBI-11522760">
        <id>Q6RW13-2</id>
    </interactant>
    <interactant intactId="EBI-2513774">
        <id>O95363</id>
        <label>FARS2</label>
    </interactant>
    <organismsDiffer>false</organismsDiffer>
    <experiments>3</experiments>
</comment>
<comment type="interaction">
    <interactant intactId="EBI-11522760">
        <id>Q6RW13-2</id>
    </interactant>
    <interactant intactId="EBI-743099">
        <id>Q969F0</id>
        <label>FATE1</label>
    </interactant>
    <organismsDiffer>false</organismsDiffer>
    <experiments>3</experiments>
</comment>
<comment type="interaction">
    <interactant intactId="EBI-11522760">
        <id>Q6RW13-2</id>
    </interactant>
    <interactant intactId="EBI-2833872">
        <id>O15552</id>
        <label>FFAR2</label>
    </interactant>
    <organismsDiffer>false</organismsDiffer>
    <experiments>3</experiments>
</comment>
<comment type="interaction">
    <interactant intactId="EBI-11522760">
        <id>Q6RW13-2</id>
    </interactant>
    <interactant intactId="EBI-16439102">
        <id>A0A0S2Z3E9</id>
        <label>FGA</label>
    </interactant>
    <organismsDiffer>false</organismsDiffer>
    <experiments>3</experiments>
</comment>
<comment type="interaction">
    <interactant intactId="EBI-11522760">
        <id>Q6RW13-2</id>
    </interactant>
    <interactant intactId="EBI-12142257">
        <id>Q8TBE3</id>
        <label>FNDC9</label>
    </interactant>
    <organismsDiffer>false</organismsDiffer>
    <experiments>3</experiments>
</comment>
<comment type="interaction">
    <interactant intactId="EBI-11522760">
        <id>Q6RW13-2</id>
    </interactant>
    <interactant intactId="EBI-16430771">
        <id>A0A0S2Z4D9</id>
        <label>GAD1</label>
    </interactant>
    <organismsDiffer>false</organismsDiffer>
    <experiments>3</experiments>
</comment>
<comment type="interaction">
    <interactant intactId="EBI-11522760">
        <id>Q6RW13-2</id>
    </interactant>
    <interactant intactId="EBI-743184">
        <id>Q99259</id>
        <label>GAD1</label>
    </interactant>
    <organismsDiffer>false</organismsDiffer>
    <experiments>6</experiments>
</comment>
<comment type="interaction">
    <interactant intactId="EBI-11522760">
        <id>Q6RW13-2</id>
    </interactant>
    <interactant intactId="EBI-9304251">
        <id>Q05329</id>
        <label>GAD2</label>
    </interactant>
    <organismsDiffer>false</organismsDiffer>
    <experiments>3</experiments>
</comment>
<comment type="interaction">
    <interactant intactId="EBI-11522760">
        <id>Q6RW13-2</id>
    </interactant>
    <interactant intactId="EBI-13345167">
        <id>Q8TDT2</id>
        <label>GPR152</label>
    </interactant>
    <organismsDiffer>false</organismsDiffer>
    <experiments>3</experiments>
</comment>
<comment type="interaction">
    <interactant intactId="EBI-11522760">
        <id>Q6RW13-2</id>
    </interactant>
    <interactant intactId="EBI-11721746">
        <id>Q8TED1</id>
        <label>GPX8</label>
    </interactant>
    <organismsDiffer>false</organismsDiffer>
    <experiments>3</experiments>
</comment>
<comment type="interaction">
    <interactant intactId="EBI-11522760">
        <id>Q6RW13-2</id>
    </interactant>
    <interactant intactId="EBI-715539">
        <id>P32780</id>
        <label>GTF2H1</label>
    </interactant>
    <organismsDiffer>false</organismsDiffer>
    <experiments>3</experiments>
</comment>
<comment type="interaction">
    <interactant intactId="EBI-11522760">
        <id>Q6RW13-2</id>
    </interactant>
    <interactant intactId="EBI-11427100">
        <id>P31937</id>
        <label>HIBADH</label>
    </interactant>
    <organismsDiffer>false</organismsDiffer>
    <experiments>3</experiments>
</comment>
<comment type="interaction">
    <interactant intactId="EBI-11522760">
        <id>Q6RW13-2</id>
    </interactant>
    <interactant intactId="EBI-2685549">
        <id>C9JCN9</id>
        <label>HSBP1L1</label>
    </interactant>
    <organismsDiffer>false</organismsDiffer>
    <experiments>3</experiments>
</comment>
<comment type="interaction">
    <interactant intactId="EBI-11522760">
        <id>Q6RW13-2</id>
    </interactant>
    <interactant intactId="EBI-18053395">
        <id>Q7Z5P4</id>
        <label>HSD17B13</label>
    </interactant>
    <organismsDiffer>false</organismsDiffer>
    <experiments>3</experiments>
</comment>
<comment type="interaction">
    <interactant intactId="EBI-11522760">
        <id>Q6RW13-2</id>
    </interactant>
    <interactant intactId="EBI-947253">
        <id>Q9UBD0</id>
        <label>HSFX2</label>
    </interactant>
    <organismsDiffer>false</organismsDiffer>
    <experiments>3</experiments>
</comment>
<comment type="interaction">
    <interactant intactId="EBI-11522760">
        <id>Q6RW13-2</id>
    </interactant>
    <interactant intactId="EBI-80490">
        <id>P16871</id>
        <label>IL7R</label>
    </interactant>
    <organismsDiffer>false</organismsDiffer>
    <experiments>3</experiments>
</comment>
<comment type="interaction">
    <interactant intactId="EBI-11522760">
        <id>Q6RW13-2</id>
    </interactant>
    <interactant intactId="EBI-3934936">
        <id>O95279</id>
        <label>KCNK5</label>
    </interactant>
    <organismsDiffer>false</organismsDiffer>
    <experiments>3</experiments>
</comment>
<comment type="interaction">
    <interactant intactId="EBI-11522760">
        <id>Q6RW13-2</id>
    </interactant>
    <interactant intactId="EBI-8632435">
        <id>P43628</id>
        <label>KIR2DL3</label>
    </interactant>
    <organismsDiffer>false</organismsDiffer>
    <experiments>3</experiments>
</comment>
<comment type="interaction">
    <interactant intactId="EBI-11522760">
        <id>Q6RW13-2</id>
    </interactant>
    <interactant intactId="EBI-17272405">
        <id>Q8N743</id>
        <label>KIR3DL3</label>
    </interactant>
    <organismsDiffer>false</organismsDiffer>
    <experiments>3</experiments>
</comment>
<comment type="interaction">
    <interactant intactId="EBI-11522760">
        <id>Q6RW13-2</id>
    </interactant>
    <interactant intactId="EBI-739832">
        <id>Q8TBB1</id>
        <label>LNX1</label>
    </interactant>
    <organismsDiffer>false</organismsDiffer>
    <experiments>3</experiments>
</comment>
<comment type="interaction">
    <interactant intactId="EBI-11522760">
        <id>Q6RW13-2</id>
    </interactant>
    <interactant intactId="EBI-3925442">
        <id>Q9HCJ2</id>
        <label>LRRC4C</label>
    </interactant>
    <organismsDiffer>false</organismsDiffer>
    <experiments>3</experiments>
</comment>
<comment type="interaction">
    <interactant intactId="EBI-11522760">
        <id>Q6RW13-2</id>
    </interactant>
    <interactant intactId="EBI-358888">
        <id>Q96AG4</id>
        <label>LRRC59</label>
    </interactant>
    <organismsDiffer>false</organismsDiffer>
    <experiments>3</experiments>
</comment>
<comment type="interaction">
    <interactant intactId="EBI-11522760">
        <id>Q6RW13-2</id>
    </interactant>
    <interactant intactId="EBI-10292326">
        <id>Q96PE7</id>
        <label>MCEE</label>
    </interactant>
    <organismsDiffer>false</organismsDiffer>
    <experiments>6</experiments>
</comment>
<comment type="interaction">
    <interactant intactId="EBI-11522760">
        <id>Q6RW13-2</id>
    </interactant>
    <interactant intactId="EBI-724754">
        <id>O14880</id>
        <label>MGST3</label>
    </interactant>
    <organismsDiffer>false</organismsDiffer>
    <experiments>3</experiments>
</comment>
<comment type="interaction">
    <interactant intactId="EBI-11522760">
        <id>Q6RW13-2</id>
    </interactant>
    <interactant intactId="EBI-740987">
        <id>Q9NQG6</id>
        <label>MIEF1</label>
    </interactant>
    <organismsDiffer>false</organismsDiffer>
    <experiments>3</experiments>
</comment>
<comment type="interaction">
    <interactant intactId="EBI-11522760">
        <id>Q6RW13-2</id>
    </interactant>
    <interactant intactId="EBI-11988931">
        <id>Q96C03-3</id>
        <label>MIEF2</label>
    </interactant>
    <organismsDiffer>false</organismsDiffer>
    <experiments>3</experiments>
</comment>
<comment type="interaction">
    <interactant intactId="EBI-11522760">
        <id>Q6RW13-2</id>
    </interactant>
    <interactant intactId="EBI-17873222">
        <id>Q15546</id>
        <label>MMD</label>
    </interactant>
    <organismsDiffer>false</organismsDiffer>
    <experiments>3</experiments>
</comment>
<comment type="interaction">
    <interactant intactId="EBI-11522760">
        <id>Q6RW13-2</id>
    </interactant>
    <interactant intactId="EBI-5454865">
        <id>Q6IN84</id>
        <label>MRM1</label>
    </interactant>
    <organismsDiffer>false</organismsDiffer>
    <experiments>3</experiments>
</comment>
<comment type="interaction">
    <interactant intactId="EBI-11522760">
        <id>Q6RW13-2</id>
    </interactant>
    <interactant intactId="EBI-5453723">
        <id>Q9Y3B7</id>
        <label>MRPL11</label>
    </interactant>
    <organismsDiffer>false</organismsDiffer>
    <experiments>3</experiments>
</comment>
<comment type="interaction">
    <interactant intactId="EBI-11522760">
        <id>Q6RW13-2</id>
    </interactant>
    <interactant intactId="EBI-2855755">
        <id>Q96E11</id>
        <label>MRRF</label>
    </interactant>
    <organismsDiffer>false</organismsDiffer>
    <experiments>3</experiments>
</comment>
<comment type="interaction">
    <interactant intactId="EBI-11522760">
        <id>Q6RW13-2</id>
    </interactant>
    <interactant intactId="EBI-7825321">
        <id>Q96E29</id>
        <label>MTERF3</label>
    </interactant>
    <organismsDiffer>false</organismsDiffer>
    <experiments>3</experiments>
</comment>
<comment type="interaction">
    <interactant intactId="EBI-11522760">
        <id>Q6RW13-2</id>
    </interactant>
    <interactant intactId="EBI-709754">
        <id>Q9HB07</id>
        <label>MYG1</label>
    </interactant>
    <organismsDiffer>false</organismsDiffer>
    <experiments>3</experiments>
</comment>
<comment type="interaction">
    <interactant intactId="EBI-11522760">
        <id>Q6RW13-2</id>
    </interactant>
    <interactant intactId="EBI-11978907">
        <id>Q9ULP0-2</id>
        <label>NDRG4</label>
    </interactant>
    <organismsDiffer>false</organismsDiffer>
    <experiments>6</experiments>
</comment>
<comment type="interaction">
    <interactant intactId="EBI-11522760">
        <id>Q6RW13-2</id>
    </interactant>
    <interactant intactId="EBI-2114801">
        <id>Q9BU61</id>
        <label>NDUFAF3</label>
    </interactant>
    <organismsDiffer>false</organismsDiffer>
    <experiments>3</experiments>
</comment>
<comment type="interaction">
    <interactant intactId="EBI-11522760">
        <id>Q6RW13-2</id>
    </interactant>
    <interactant intactId="EBI-3919611">
        <id>Q16617</id>
        <label>NKG7</label>
    </interactant>
    <organismsDiffer>false</organismsDiffer>
    <experiments>3</experiments>
</comment>
<comment type="interaction">
    <interactant intactId="EBI-11522760">
        <id>Q6RW13-2</id>
    </interactant>
    <interactant intactId="EBI-741171">
        <id>Q96AL5</id>
        <label>PBX3</label>
    </interactant>
    <organismsDiffer>false</organismsDiffer>
    <experiments>3</experiments>
</comment>
<comment type="interaction">
    <interactant intactId="EBI-11522760">
        <id>Q6RW13-2</id>
    </interactant>
    <interactant intactId="EBI-2563309">
        <id>P49585</id>
        <label>PCYT1A</label>
    </interactant>
    <organismsDiffer>false</organismsDiffer>
    <experiments>3</experiments>
</comment>
<comment type="interaction">
    <interactant intactId="EBI-11522760">
        <id>Q6RW13-2</id>
    </interactant>
    <interactant intactId="EBI-2568609">
        <id>Q9BSJ6</id>
        <label>PIMREG</label>
    </interactant>
    <organismsDiffer>false</organismsDiffer>
    <experiments>3</experiments>
</comment>
<comment type="interaction">
    <interactant intactId="EBI-11522760">
        <id>Q6RW13-2</id>
    </interactant>
    <interactant intactId="EBI-14223623">
        <id>Q9UKF7-2</id>
        <label>PITPNC1</label>
    </interactant>
    <organismsDiffer>false</organismsDiffer>
    <experiments>3</experiments>
</comment>
<comment type="interaction">
    <interactant intactId="EBI-11522760">
        <id>Q6RW13-2</id>
    </interactant>
    <interactant intactId="EBI-11030787">
        <id>Q9NVS9</id>
        <label>PNPO</label>
    </interactant>
    <organismsDiffer>false</organismsDiffer>
    <experiments>6</experiments>
</comment>
<comment type="interaction">
    <interactant intactId="EBI-11522760">
        <id>Q6RW13-2</id>
    </interactant>
    <interactant intactId="EBI-713000">
        <id>Q9Y2S7</id>
        <label>POLDIP2</label>
    </interactant>
    <organismsDiffer>false</organismsDiffer>
    <experiments>3</experiments>
</comment>
<comment type="interaction">
    <interactant intactId="EBI-11522760">
        <id>Q6RW13-2</id>
    </interactant>
    <interactant intactId="EBI-5544229">
        <id>P30405</id>
        <label>PPIF</label>
    </interactant>
    <organismsDiffer>false</organismsDiffer>
    <experiments>3</experiments>
</comment>
<comment type="interaction">
    <interactant intactId="EBI-11522760">
        <id>Q6RW13-2</id>
    </interactant>
    <interactant intactId="EBI-2798416">
        <id>Q99633</id>
        <label>PRPF18</label>
    </interactant>
    <organismsDiffer>false</organismsDiffer>
    <experiments>3</experiments>
</comment>
<comment type="interaction">
    <interactant intactId="EBI-11522760">
        <id>Q6RW13-2</id>
    </interactant>
    <interactant intactId="EBI-742898">
        <id>P43378</id>
        <label>PTPN9</label>
    </interactant>
    <organismsDiffer>false</organismsDiffer>
    <experiments>3</experiments>
</comment>
<comment type="interaction">
    <interactant intactId="EBI-11522760">
        <id>Q6RW13-2</id>
    </interactant>
    <interactant intactId="EBI-3924277">
        <id>Q15771</id>
        <label>RAB30</label>
    </interactant>
    <organismsDiffer>false</organismsDiffer>
    <experiments>3</experiments>
</comment>
<comment type="interaction">
    <interactant intactId="EBI-11522760">
        <id>Q6RW13-2</id>
    </interactant>
    <interactant intactId="EBI-3232108">
        <id>Q8N0V3</id>
        <label>RBFA</label>
    </interactant>
    <organismsDiffer>false</organismsDiffer>
    <experiments>3</experiments>
</comment>
<comment type="interaction">
    <interactant intactId="EBI-11522760">
        <id>Q6RW13-2</id>
    </interactant>
    <interactant intactId="EBI-10192441">
        <id>Q86VR2</id>
        <label>RETREG3</label>
    </interactant>
    <organismsDiffer>false</organismsDiffer>
    <experiments>3</experiments>
</comment>
<comment type="interaction">
    <interactant intactId="EBI-11522760">
        <id>Q6RW13-2</id>
    </interactant>
    <interactant intactId="EBI-2806908">
        <id>Q96LZ7</id>
        <label>RMDN2</label>
    </interactant>
    <organismsDiffer>false</organismsDiffer>
    <experiments>3</experiments>
</comment>
<comment type="interaction">
    <interactant intactId="EBI-11522760">
        <id>Q6RW13-2</id>
    </interactant>
    <interactant intactId="EBI-16432654">
        <id>A8MRB1</id>
        <label>S100B</label>
    </interactant>
    <organismsDiffer>false</organismsDiffer>
    <experiments>3</experiments>
</comment>
<comment type="interaction">
    <interactant intactId="EBI-11522760">
        <id>Q6RW13-2</id>
    </interactant>
    <interactant intactId="EBI-745846">
        <id>P57086</id>
        <label>SCAND1</label>
    </interactant>
    <organismsDiffer>false</organismsDiffer>
    <experiments>3</experiments>
</comment>
<comment type="interaction">
    <interactant intactId="EBI-11522760">
        <id>Q6RW13-2</id>
    </interactant>
    <interactant intactId="EBI-714881">
        <id>Q9HC62</id>
        <label>SENP2</label>
    </interactant>
    <organismsDiffer>false</organismsDiffer>
    <experiments>3</experiments>
</comment>
<comment type="interaction">
    <interactant intactId="EBI-11522760">
        <id>Q6RW13-2</id>
    </interactant>
    <interactant intactId="EBI-2623095">
        <id>Q9Y371</id>
        <label>SH3GLB1</label>
    </interactant>
    <organismsDiffer>false</organismsDiffer>
    <experiments>3</experiments>
</comment>
<comment type="interaction">
    <interactant intactId="EBI-11522760">
        <id>Q6RW13-2</id>
    </interactant>
    <interactant intactId="EBI-17595455">
        <id>P54219-3</id>
        <label>SLC18A1</label>
    </interactant>
    <organismsDiffer>false</organismsDiffer>
    <experiments>3</experiments>
</comment>
<comment type="interaction">
    <interactant intactId="EBI-11522760">
        <id>Q6RW13-2</id>
    </interactant>
    <interactant intactId="EBI-5235586">
        <id>Q8TBB6</id>
        <label>SLC7A14</label>
    </interactant>
    <organismsDiffer>false</organismsDiffer>
    <experiments>3</experiments>
</comment>
<comment type="interaction">
    <interactant intactId="EBI-11522760">
        <id>Q6RW13-2</id>
    </interactant>
    <interactant intactId="EBI-2872322">
        <id>Q9H0W8</id>
        <label>SMG9</label>
    </interactant>
    <organismsDiffer>false</organismsDiffer>
    <experiments>3</experiments>
</comment>
<comment type="interaction">
    <interactant intactId="EBI-11522760">
        <id>Q6RW13-2</id>
    </interactant>
    <interactant intactId="EBI-742688">
        <id>Q9NZD8</id>
        <label>SPG21</label>
    </interactant>
    <organismsDiffer>false</organismsDiffer>
    <experiments>3</experiments>
</comment>
<comment type="interaction">
    <interactant intactId="EBI-11522760">
        <id>Q6RW13-2</id>
    </interactant>
    <interactant intactId="EBI-12033476">
        <id>O60225-2</id>
        <label>SSX5</label>
    </interactant>
    <organismsDiffer>false</organismsDiffer>
    <experiments>3</experiments>
</comment>
<comment type="interaction">
    <interactant intactId="EBI-11522760">
        <id>Q6RW13-2</id>
    </interactant>
    <interactant intactId="EBI-722932">
        <id>P49675</id>
        <label>STAR</label>
    </interactant>
    <organismsDiffer>false</organismsDiffer>
    <experiments>3</experiments>
</comment>
<comment type="interaction">
    <interactant intactId="EBI-11522760">
        <id>Q6RW13-2</id>
    </interactant>
    <interactant intactId="EBI-17217258">
        <id>Q96DR4</id>
        <label>STARD4</label>
    </interactant>
    <organismsDiffer>false</organismsDiffer>
    <experiments>3</experiments>
</comment>
<comment type="interaction">
    <interactant intactId="EBI-11522760">
        <id>Q6RW13-2</id>
    </interactant>
    <interactant intactId="EBI-20117546">
        <id>Q9H169-2</id>
        <label>STMN4</label>
    </interactant>
    <organismsDiffer>false</organismsDiffer>
    <experiments>3</experiments>
</comment>
<comment type="interaction">
    <interactant intactId="EBI-11522760">
        <id>Q6RW13-2</id>
    </interactant>
    <interactant intactId="EBI-712466">
        <id>Q16623</id>
        <label>STX1A</label>
    </interactant>
    <organismsDiffer>false</organismsDiffer>
    <experiments>3</experiments>
</comment>
<comment type="interaction">
    <interactant intactId="EBI-11522760">
        <id>Q6RW13-2</id>
    </interactant>
    <interactant intactId="EBI-2269898">
        <id>Q9P2R7</id>
        <label>SUCLA2</label>
    </interactant>
    <organismsDiffer>false</organismsDiffer>
    <experiments>6</experiments>
</comment>
<comment type="interaction">
    <interactant intactId="EBI-11522760">
        <id>Q6RW13-2</id>
    </interactant>
    <interactant intactId="EBI-10238936">
        <id>Q17RD7</id>
        <label>SYT16</label>
    </interactant>
    <organismsDiffer>false</organismsDiffer>
    <experiments>3</experiments>
</comment>
<comment type="interaction">
    <interactant intactId="EBI-11522760">
        <id>Q6RW13-2</id>
    </interactant>
    <interactant intactId="EBI-702328">
        <id>Q969Z0</id>
        <label>TBRG4</label>
    </interactant>
    <organismsDiffer>false</organismsDiffer>
    <experiments>3</experiments>
</comment>
<comment type="interaction">
    <interactant intactId="EBI-11522760">
        <id>Q6RW13-2</id>
    </interactant>
    <interactant intactId="EBI-710310">
        <id>Q15560</id>
        <label>TCEA2</label>
    </interactant>
    <organismsDiffer>false</organismsDiffer>
    <experiments>3</experiments>
</comment>
<comment type="interaction">
    <interactant intactId="EBI-11522760">
        <id>Q6RW13-2</id>
    </interactant>
    <interactant intactId="EBI-1049924">
        <id>Q00059</id>
        <label>TFAM</label>
    </interactant>
    <organismsDiffer>false</organismsDiffer>
    <experiments>3</experiments>
</comment>
<comment type="interaction">
    <interactant intactId="EBI-11522760">
        <id>Q6RW13-2</id>
    </interactant>
    <interactant intactId="EBI-726691">
        <id>Q8WY91</id>
        <label>THAP4</label>
    </interactant>
    <organismsDiffer>false</organismsDiffer>
    <experiments>3</experiments>
</comment>
<comment type="interaction">
    <interactant intactId="EBI-11522760">
        <id>Q6RW13-2</id>
    </interactant>
    <interactant intactId="EBI-7238458">
        <id>Q8IV31</id>
        <label>TMEM139</label>
    </interactant>
    <organismsDiffer>false</organismsDiffer>
    <experiments>3</experiments>
</comment>
<comment type="interaction">
    <interactant intactId="EBI-11522760">
        <id>Q6RW13-2</id>
    </interactant>
    <interactant intactId="EBI-11724433">
        <id>Q6ZT21</id>
        <label>TMPPE</label>
    </interactant>
    <organismsDiffer>false</organismsDiffer>
    <experiments>3</experiments>
</comment>
<comment type="interaction">
    <interactant intactId="EBI-11522760">
        <id>Q6RW13-2</id>
    </interactant>
    <interactant intactId="EBI-10210710">
        <id>P49638</id>
        <label>TTPA</label>
    </interactant>
    <organismsDiffer>false</organismsDiffer>
    <experiments>3</experiments>
</comment>
<comment type="interaction">
    <interactant intactId="EBI-11522760">
        <id>Q6RW13-2</id>
    </interactant>
    <interactant intactId="EBI-2932492">
        <id>Q99757</id>
        <label>TXN2</label>
    </interactant>
    <organismsDiffer>false</organismsDiffer>
    <experiments>3</experiments>
</comment>
<comment type="interaction">
    <interactant intactId="EBI-11522760">
        <id>Q6RW13-2</id>
    </interactant>
    <interactant intactId="EBI-10180829">
        <id>Q7KZS0</id>
        <label>UBE2I</label>
    </interactant>
    <organismsDiffer>false</organismsDiffer>
    <experiments>3</experiments>
</comment>
<comment type="interaction">
    <interactant intactId="EBI-11522760">
        <id>Q6RW13-2</id>
    </interactant>
    <interactant intactId="EBI-1049286">
        <id>Q9Y2Z4</id>
        <label>YARS2</label>
    </interactant>
    <organismsDiffer>false</organismsDiffer>
    <experiments>3</experiments>
</comment>
<comment type="subcellular location">
    <subcellularLocation>
        <location evidence="4">Endoplasmic reticulum membrane</location>
        <topology evidence="4">Multi-pass membrane protein</topology>
    </subcellularLocation>
    <subcellularLocation>
        <location evidence="4">Golgi apparatus membrane</location>
        <topology evidence="4">Multi-pass membrane protein</topology>
    </subcellularLocation>
    <subcellularLocation>
        <location evidence="4">Cytoplasmic vesicle membrane</location>
        <topology evidence="4">Multi-pass membrane protein</topology>
    </subcellularLocation>
    <text>Present in perinuclear vesicular membranes, Endoplasmic reticulum, Golgi and endocytic vesicles.</text>
</comment>
<comment type="alternative products">
    <event type="alternative splicing"/>
    <isoform>
        <id>Q6RW13-1</id>
        <name>1</name>
        <sequence type="displayed"/>
    </isoform>
    <isoform>
        <id>Q6RW13-2</id>
        <name>2</name>
        <sequence type="described" ref="VSP_014839"/>
    </isoform>
    <isoform>
        <id>Q6RW13-3</id>
        <name>3</name>
        <sequence type="described" ref="VSP_039290"/>
    </isoform>
    <isoform>
        <id>Q6RW13-5</id>
        <name>5</name>
        <sequence type="described" ref="VSP_040406"/>
    </isoform>
    <isoform>
        <id>Q6RW13-4</id>
        <name>4</name>
        <sequence type="described" ref="VSP_039291"/>
    </isoform>
</comment>
<comment type="tissue specificity">
    <text evidence="3">Ubiquitous but more abundant in kidney, heart, pancreas and thyroid.</text>
</comment>
<organism>
    <name type="scientific">Homo sapiens</name>
    <name type="common">Human</name>
    <dbReference type="NCBI Taxonomy" id="9606"/>
    <lineage>
        <taxon>Eukaryota</taxon>
        <taxon>Metazoa</taxon>
        <taxon>Chordata</taxon>
        <taxon>Craniata</taxon>
        <taxon>Vertebrata</taxon>
        <taxon>Euteleostomi</taxon>
        <taxon>Mammalia</taxon>
        <taxon>Eutheria</taxon>
        <taxon>Euarchontoglires</taxon>
        <taxon>Primates</taxon>
        <taxon>Haplorrhini</taxon>
        <taxon>Catarrhini</taxon>
        <taxon>Hominidae</taxon>
        <taxon>Homo</taxon>
    </lineage>
</organism>
<proteinExistence type="evidence at protein level"/>
<dbReference type="EMBL" id="AF312374">
    <property type="protein sequence ID" value="AAL26806.1"/>
    <property type="molecule type" value="mRNA"/>
</dbReference>
<dbReference type="EMBL" id="AF165187">
    <property type="protein sequence ID" value="AAF89547.1"/>
    <property type="molecule type" value="mRNA"/>
</dbReference>
<dbReference type="EMBL" id="CA866314">
    <property type="status" value="NOT_ANNOTATED_CDS"/>
    <property type="molecule type" value="mRNA"/>
</dbReference>
<dbReference type="EMBL" id="AY488088">
    <property type="protein sequence ID" value="AAR25556.1"/>
    <property type="molecule type" value="Genomic_DNA"/>
</dbReference>
<dbReference type="EMBL" id="AL953897">
    <property type="status" value="NOT_ANNOTATED_CDS"/>
    <property type="molecule type" value="Genomic_DNA"/>
</dbReference>
<dbReference type="EMBL" id="CH471130">
    <property type="protein sequence ID" value="EAW71702.1"/>
    <property type="molecule type" value="Genomic_DNA"/>
</dbReference>
<dbReference type="EMBL" id="BC017328">
    <property type="protein sequence ID" value="AAH17328.1"/>
    <property type="molecule type" value="mRNA"/>
</dbReference>
<dbReference type="EMBL" id="BE782705">
    <property type="status" value="NOT_ANNOTATED_CDS"/>
    <property type="molecule type" value="mRNA"/>
</dbReference>
<dbReference type="CCDS" id="CCDS136.1">
    <molecule id="Q6RW13-1"/>
</dbReference>
<dbReference type="CCDS" id="CCDS30585.1">
    <molecule id="Q6RW13-2"/>
</dbReference>
<dbReference type="CCDS" id="CCDS30586.1">
    <molecule id="Q6RW13-4"/>
</dbReference>
<dbReference type="CCDS" id="CCDS41248.1">
    <molecule id="Q6RW13-3"/>
</dbReference>
<dbReference type="CCDS" id="CCDS44056.1">
    <molecule id="Q6RW13-5"/>
</dbReference>
<dbReference type="RefSeq" id="NP_001035284.1">
    <molecule id="Q6RW13-2"/>
    <property type="nucleotide sequence ID" value="NM_001040194.2"/>
</dbReference>
<dbReference type="RefSeq" id="NP_001035285.1">
    <molecule id="Q6RW13-4"/>
    <property type="nucleotide sequence ID" value="NM_001040195.2"/>
</dbReference>
<dbReference type="RefSeq" id="NP_001035286.1">
    <molecule id="Q6RW13-5"/>
    <property type="nucleotide sequence ID" value="NM_001040196.2"/>
</dbReference>
<dbReference type="RefSeq" id="NP_001035287.1">
    <molecule id="Q6RW13-3"/>
    <property type="nucleotide sequence ID" value="NM_001040197.2"/>
</dbReference>
<dbReference type="RefSeq" id="NP_065083.3">
    <molecule id="Q6RW13-1"/>
    <property type="nucleotide sequence ID" value="NM_020350.4"/>
</dbReference>
<dbReference type="SMR" id="Q6RW13"/>
<dbReference type="BioGRID" id="121356">
    <property type="interactions" value="179"/>
</dbReference>
<dbReference type="FunCoup" id="Q6RW13">
    <property type="interactions" value="978"/>
</dbReference>
<dbReference type="IntAct" id="Q6RW13">
    <property type="interactions" value="155"/>
</dbReference>
<dbReference type="MINT" id="Q6RW13"/>
<dbReference type="STRING" id="9606.ENSP00000319713"/>
<dbReference type="iPTMnet" id="Q6RW13"/>
<dbReference type="PhosphoSitePlus" id="Q6RW13"/>
<dbReference type="SwissPalm" id="Q6RW13"/>
<dbReference type="BioMuta" id="AGTRAP"/>
<dbReference type="DMDM" id="71152303"/>
<dbReference type="jPOST" id="Q6RW13"/>
<dbReference type="MassIVE" id="Q6RW13"/>
<dbReference type="PaxDb" id="9606-ENSP00000319713"/>
<dbReference type="PeptideAtlas" id="Q6RW13"/>
<dbReference type="ProteomicsDB" id="67329">
    <molecule id="Q6RW13-1"/>
</dbReference>
<dbReference type="ProteomicsDB" id="67330">
    <molecule id="Q6RW13-2"/>
</dbReference>
<dbReference type="ProteomicsDB" id="67331">
    <molecule id="Q6RW13-3"/>
</dbReference>
<dbReference type="ProteomicsDB" id="67332">
    <molecule id="Q6RW13-4"/>
</dbReference>
<dbReference type="ProteomicsDB" id="67333">
    <molecule id="Q6RW13-5"/>
</dbReference>
<dbReference type="Pumba" id="Q6RW13"/>
<dbReference type="TopDownProteomics" id="Q6RW13-1">
    <molecule id="Q6RW13-1"/>
</dbReference>
<dbReference type="TopDownProteomics" id="Q6RW13-2">
    <molecule id="Q6RW13-2"/>
</dbReference>
<dbReference type="Antibodypedia" id="28197">
    <property type="antibodies" value="226 antibodies from 27 providers"/>
</dbReference>
<dbReference type="DNASU" id="57085"/>
<dbReference type="Ensembl" id="ENST00000314340.10">
    <molecule id="Q6RW13-1"/>
    <property type="protein sequence ID" value="ENSP00000319713.5"/>
    <property type="gene ID" value="ENSG00000177674.16"/>
</dbReference>
<dbReference type="Ensembl" id="ENST00000376629.8">
    <molecule id="Q6RW13-2"/>
    <property type="protein sequence ID" value="ENSP00000365816.4"/>
    <property type="gene ID" value="ENSG00000177674.16"/>
</dbReference>
<dbReference type="Ensembl" id="ENST00000376637.7">
    <molecule id="Q6RW13-4"/>
    <property type="protein sequence ID" value="ENSP00000365824.3"/>
    <property type="gene ID" value="ENSG00000177674.16"/>
</dbReference>
<dbReference type="Ensembl" id="ENST00000400895.6">
    <molecule id="Q6RW13-3"/>
    <property type="protein sequence ID" value="ENSP00000383688.2"/>
    <property type="gene ID" value="ENSG00000177674.16"/>
</dbReference>
<dbReference type="Ensembl" id="ENST00000452018.6">
    <molecule id="Q6RW13-5"/>
    <property type="protein sequence ID" value="ENSP00000408505.2"/>
    <property type="gene ID" value="ENSG00000177674.16"/>
</dbReference>
<dbReference type="GeneID" id="57085"/>
<dbReference type="KEGG" id="hsa:57085"/>
<dbReference type="MANE-Select" id="ENST00000314340.10">
    <property type="protein sequence ID" value="ENSP00000319713.5"/>
    <property type="RefSeq nucleotide sequence ID" value="NM_020350.5"/>
    <property type="RefSeq protein sequence ID" value="NP_065083.3"/>
</dbReference>
<dbReference type="UCSC" id="uc001ast.4">
    <molecule id="Q6RW13-1"/>
    <property type="organism name" value="human"/>
</dbReference>
<dbReference type="AGR" id="HGNC:13539"/>
<dbReference type="CTD" id="57085"/>
<dbReference type="DisGeNET" id="57085"/>
<dbReference type="GeneCards" id="AGTRAP"/>
<dbReference type="HGNC" id="HGNC:13539">
    <property type="gene designation" value="AGTRAP"/>
</dbReference>
<dbReference type="HPA" id="ENSG00000177674">
    <property type="expression patterns" value="Low tissue specificity"/>
</dbReference>
<dbReference type="MIM" id="608729">
    <property type="type" value="gene"/>
</dbReference>
<dbReference type="neXtProt" id="NX_Q6RW13"/>
<dbReference type="OpenTargets" id="ENSG00000177674"/>
<dbReference type="PharmGKB" id="PA38363"/>
<dbReference type="VEuPathDB" id="HostDB:ENSG00000177674"/>
<dbReference type="eggNOG" id="ENOG502S36M">
    <property type="taxonomic scope" value="Eukaryota"/>
</dbReference>
<dbReference type="GeneTree" id="ENSGT00390000017402"/>
<dbReference type="HOGENOM" id="CLU_148105_0_0_1"/>
<dbReference type="InParanoid" id="Q6RW13"/>
<dbReference type="OMA" id="IMNGWAV"/>
<dbReference type="OrthoDB" id="9838029at2759"/>
<dbReference type="PAN-GO" id="Q6RW13">
    <property type="GO annotations" value="2 GO annotations based on evolutionary models"/>
</dbReference>
<dbReference type="PhylomeDB" id="Q6RW13"/>
<dbReference type="TreeFam" id="TF324477"/>
<dbReference type="PathwayCommons" id="Q6RW13"/>
<dbReference type="Reactome" id="R-HSA-6802952">
    <property type="pathway name" value="Signaling by BRAF and RAF1 fusions"/>
</dbReference>
<dbReference type="SignaLink" id="Q6RW13"/>
<dbReference type="BioGRID-ORCS" id="57085">
    <property type="hits" value="10 hits in 1156 CRISPR screens"/>
</dbReference>
<dbReference type="ChiTaRS" id="AGTRAP">
    <property type="organism name" value="human"/>
</dbReference>
<dbReference type="GeneWiki" id="AGTRAP"/>
<dbReference type="GenomeRNAi" id="57085"/>
<dbReference type="Pharos" id="Q6RW13">
    <property type="development level" value="Tbio"/>
</dbReference>
<dbReference type="PRO" id="PR:Q6RW13"/>
<dbReference type="Proteomes" id="UP000005640">
    <property type="component" value="Chromosome 1"/>
</dbReference>
<dbReference type="RNAct" id="Q6RW13">
    <property type="molecule type" value="protein"/>
</dbReference>
<dbReference type="Bgee" id="ENSG00000177674">
    <property type="expression patterns" value="Expressed in granulocyte and 176 other cell types or tissues"/>
</dbReference>
<dbReference type="ExpressionAtlas" id="Q6RW13">
    <property type="expression patterns" value="baseline and differential"/>
</dbReference>
<dbReference type="GO" id="GO:0005938">
    <property type="term" value="C:cell cortex"/>
    <property type="evidence" value="ECO:0007669"/>
    <property type="project" value="Ensembl"/>
</dbReference>
<dbReference type="GO" id="GO:0030659">
    <property type="term" value="C:cytoplasmic vesicle membrane"/>
    <property type="evidence" value="ECO:0007669"/>
    <property type="project" value="UniProtKB-SubCell"/>
</dbReference>
<dbReference type="GO" id="GO:0005789">
    <property type="term" value="C:endoplasmic reticulum membrane"/>
    <property type="evidence" value="ECO:0007669"/>
    <property type="project" value="UniProtKB-SubCell"/>
</dbReference>
<dbReference type="GO" id="GO:0005794">
    <property type="term" value="C:Golgi apparatus"/>
    <property type="evidence" value="ECO:0000314"/>
    <property type="project" value="HPA"/>
</dbReference>
<dbReference type="GO" id="GO:0000139">
    <property type="term" value="C:Golgi membrane"/>
    <property type="evidence" value="ECO:0007669"/>
    <property type="project" value="UniProtKB-SubCell"/>
</dbReference>
<dbReference type="GO" id="GO:0043231">
    <property type="term" value="C:intracellular membrane-bounded organelle"/>
    <property type="evidence" value="ECO:0000314"/>
    <property type="project" value="HPA"/>
</dbReference>
<dbReference type="GO" id="GO:0005886">
    <property type="term" value="C:plasma membrane"/>
    <property type="evidence" value="ECO:0000318"/>
    <property type="project" value="GO_Central"/>
</dbReference>
<dbReference type="GO" id="GO:0004945">
    <property type="term" value="F:angiotensin type II receptor activity"/>
    <property type="evidence" value="ECO:0007669"/>
    <property type="project" value="Ensembl"/>
</dbReference>
<dbReference type="GO" id="GO:0042802">
    <property type="term" value="F:identical protein binding"/>
    <property type="evidence" value="ECO:0000353"/>
    <property type="project" value="IntAct"/>
</dbReference>
<dbReference type="GO" id="GO:0008217">
    <property type="term" value="P:regulation of blood pressure"/>
    <property type="evidence" value="ECO:0000318"/>
    <property type="project" value="GO_Central"/>
</dbReference>
<dbReference type="GO" id="GO:0001666">
    <property type="term" value="P:response to hypoxia"/>
    <property type="evidence" value="ECO:0007669"/>
    <property type="project" value="Ensembl"/>
</dbReference>
<dbReference type="InterPro" id="IPR009436">
    <property type="entry name" value="AGTRAP"/>
</dbReference>
<dbReference type="PANTHER" id="PTHR16521">
    <property type="entry name" value="TYPE-1 ANGIOTENSIN II RECEPTOR-ASSOCIATED PROTEIN"/>
    <property type="match status" value="1"/>
</dbReference>
<dbReference type="PANTHER" id="PTHR16521:SF3">
    <property type="entry name" value="TYPE-1 ANGIOTENSIN II RECEPTOR-ASSOCIATED PROTEIN"/>
    <property type="match status" value="1"/>
</dbReference>
<dbReference type="Pfam" id="PF06396">
    <property type="entry name" value="AGTRAP"/>
    <property type="match status" value="1"/>
</dbReference>
<dbReference type="SMART" id="SM00805">
    <property type="entry name" value="AGTRAP"/>
    <property type="match status" value="1"/>
</dbReference>
<keyword id="KW-0025">Alternative splicing</keyword>
<keyword id="KW-0968">Cytoplasmic vesicle</keyword>
<keyword id="KW-0256">Endoplasmic reticulum</keyword>
<keyword id="KW-0333">Golgi apparatus</keyword>
<keyword id="KW-0472">Membrane</keyword>
<keyword id="KW-0597">Phosphoprotein</keyword>
<keyword id="KW-1267">Proteomics identification</keyword>
<keyword id="KW-1185">Reference proteome</keyword>
<keyword id="KW-0812">Transmembrane</keyword>
<keyword id="KW-1133">Transmembrane helix</keyword>
<evidence type="ECO:0000255" key="1"/>
<evidence type="ECO:0000256" key="2">
    <source>
        <dbReference type="SAM" id="MobiDB-lite"/>
    </source>
</evidence>
<evidence type="ECO:0000269" key="3">
    <source>
    </source>
</evidence>
<evidence type="ECO:0000269" key="4">
    <source>
    </source>
</evidence>
<evidence type="ECO:0000269" key="5">
    <source ref="4"/>
</evidence>
<evidence type="ECO:0000303" key="6">
    <source>
    </source>
</evidence>
<evidence type="ECO:0000303" key="7">
    <source ref="3"/>
</evidence>
<evidence type="ECO:0000305" key="8"/>
<evidence type="ECO:0007744" key="9">
    <source>
    </source>
</evidence>
<name>ATRAP_HUMAN</name>
<protein>
    <recommendedName>
        <fullName>Type-1 angiotensin II receptor-associated protein</fullName>
    </recommendedName>
    <alternativeName>
        <fullName>AT1 receptor-associated protein</fullName>
    </alternativeName>
</protein>
<feature type="chain" id="PRO_0000064735" description="Type-1 angiotensin II receptor-associated protein">
    <location>
        <begin position="1"/>
        <end position="159"/>
    </location>
</feature>
<feature type="topological domain" description="Extracellular" evidence="1">
    <location>
        <begin position="1"/>
        <end position="23"/>
    </location>
</feature>
<feature type="transmembrane region" description="Helical" evidence="1">
    <location>
        <begin position="24"/>
        <end position="44"/>
    </location>
</feature>
<feature type="topological domain" description="Cytoplasmic" evidence="1">
    <location>
        <begin position="45"/>
        <end position="55"/>
    </location>
</feature>
<feature type="transmembrane region" description="Helical" evidence="1">
    <location>
        <begin position="56"/>
        <end position="76"/>
    </location>
</feature>
<feature type="topological domain" description="Extracellular" evidence="1">
    <location>
        <begin position="77"/>
        <end position="86"/>
    </location>
</feature>
<feature type="transmembrane region" description="Helical" evidence="1">
    <location>
        <begin position="87"/>
        <end position="107"/>
    </location>
</feature>
<feature type="topological domain" description="Cytoplasmic" evidence="1">
    <location>
        <begin position="108"/>
        <end position="159"/>
    </location>
</feature>
<feature type="region of interest" description="Interaction with AGTR1">
    <location>
        <begin position="110"/>
        <end position="122"/>
    </location>
</feature>
<feature type="region of interest" description="Disordered" evidence="2">
    <location>
        <begin position="140"/>
        <end position="159"/>
    </location>
</feature>
<feature type="modified residue" description="Phosphoserine" evidence="9">
    <location>
        <position position="126"/>
    </location>
</feature>
<feature type="modified residue" description="Phosphoserine" evidence="9">
    <location>
        <position position="127"/>
    </location>
</feature>
<feature type="modified residue" description="Phosphothreonine" evidence="9">
    <location>
        <position position="135"/>
    </location>
</feature>
<feature type="modified residue" description="Phosphoserine" evidence="9">
    <location>
        <position position="138"/>
    </location>
</feature>
<feature type="modified residue" description="Phosphoserine" evidence="9">
    <location>
        <position position="153"/>
    </location>
</feature>
<feature type="splice variant" id="VSP_039291" description="In isoform 4." evidence="7">
    <original>VILLGHWLLTTWGCIVFSGSYAWANFTILALGVWAVAQRDSIDAISMFLGGLLATIFLDIVHISIFYPRVSLTDTGRFGVGMAILSLLLKPLSCCFVYHMYRERGGELLVHTGFLGSSQDRSAYQTIDSAEAPADPFAVPEGRSQDARGY</original>
    <variation>GLHCILRLLCLGQLHHPGLGRVGCGSAGLHRRHKHVSGWLAGHHLPGHRAHQHLLPAGQPHGHGPLWRGHGHPQLAAQAALLLLRLPHVPGARGFPWVFSGP</variation>
    <location>
        <begin position="10"/>
        <end position="159"/>
    </location>
</feature>
<feature type="splice variant" id="VSP_039290" description="In isoform 3." evidence="8">
    <original>WGCIVFSGSYAWANFTILALGVWAVAQRDSIDAISMFLGGLLATIFLDIVHISIFYPRVSLTDTGRFGVGMAILSLLLKPLSCCFVYHMYRERGGELLVHTGFLGSSQDRSAYQTIDSAEAPADPFAVPEGRSQDARGY</original>
    <variation>CFWRHFSAKPRLETIELTCALCKLRSAAHRATAGLHCILRLLCLGQLHHPGLGRVGCGSAGLHRRHKHVSGWLAGHHLPGHRAHQHLLPAGQPHGHGPLWRGHGHPQLAAQAALLLLRLPHVPGARG</variation>
    <location>
        <begin position="21"/>
        <end position="159"/>
    </location>
</feature>
<feature type="splice variant" id="VSP_040406" description="In isoform 5." evidence="6">
    <original>WGCIVFSGSYAWANFTILALGVWAVAQRDSIDAISMFLGGLLATIFLDIVHISIFYPRVSLTDTGRFGVGMAILSLLLKPLSCCFVYHMYRERGGELLVHTGFLGSSQDRSAYQTIDSAEAPADPFAVPEGRSQDARGY</original>
    <variation>CFWRHFSAKPRLETIELTCALCKLRSAAHRATAGLHCILRLLCLGQLHHPGLGRVGCGSAGLHRRHKHVSGWLAGHHLPGHRAHQHLLPAGQPHGHGPLWRGHGHPQLAAQAALLLLRLPHVPGARGFPWVFSGP</variation>
    <location>
        <begin position="21"/>
        <end position="159"/>
    </location>
</feature>
<feature type="splice variant" id="VSP_014839" description="In isoform 2." evidence="6">
    <location>
        <begin position="115"/>
        <end position="121"/>
    </location>
</feature>
<feature type="sequence variant" id="VAR_023075" description="In dbSNP:rs17875960." evidence="5">
    <original>A</original>
    <variation>V</variation>
    <location>
        <position position="143"/>
    </location>
</feature>
<feature type="sequence conflict" description="In Ref. 2; AAF89547." evidence="8" ref="2">
    <original>G</original>
    <variation>R</variation>
    <location>
        <position position="158"/>
    </location>
</feature>
<feature type="sequence conflict" description="In Ref. 1; AAL26806." evidence="8" ref="1">
    <original>Y</original>
    <variation>S</variation>
    <location>
        <position position="159"/>
    </location>
</feature>